<sequence length="216" mass="23671">MNNMNVIIADDHPIVLFGIRKSLEQIEWVNVVGEFEDSTALINNLPKLDAHVLITDLSMPGDKYGDGITLIKYIKRHFPSLSIIVLTMNNNPAILSAVLDLDIEGIVLKQGAPTDLPKALAALQKGKKFTPESVSRLLEKISAGGYGDKRLSPKESEVLRLFAEGFLVTEIAKKLNRSIKTISSQKKSAMMKLGVENDIALLNYLSSVTLSPADKD</sequence>
<protein>
    <recommendedName>
        <fullName evidence="1">Transcriptional regulatory protein RcsB</fullName>
    </recommendedName>
</protein>
<gene>
    <name evidence="1" type="primary">rcsB</name>
</gene>
<reference key="1">
    <citation type="journal article" date="1993" name="J. Bacteriol.">
        <title>Characterization of rcsB and rcsC from Escherichia coli O9:K30:H12 and examination of the role of the rcs regulatory system in expression of group I capsular polysaccharides.</title>
        <authorList>
            <person name="Jayaratne P."/>
            <person name="Keenleyside W.J."/>
            <person name="Maclachlan P.R."/>
            <person name="Dodgson C."/>
            <person name="Whitfield C."/>
        </authorList>
    </citation>
    <scope>NUCLEOTIDE SEQUENCE [GENOMIC DNA]</scope>
    <scope>FUNCTION IN CAPSULAR POLYSACCHARIDE SYNTHESIS</scope>
    <source>
        <strain>O9:K30:H12</strain>
    </source>
</reference>
<dbReference type="EMBL" id="L11272">
    <property type="protein sequence ID" value="AAA24506.1"/>
    <property type="molecule type" value="Genomic_DNA"/>
</dbReference>
<dbReference type="PIR" id="JV0068">
    <property type="entry name" value="BVECCB"/>
</dbReference>
<dbReference type="RefSeq" id="WP_001061917.1">
    <property type="nucleotide sequence ID" value="NZ_WXZA01000001.1"/>
</dbReference>
<dbReference type="SMR" id="P0DMC8"/>
<dbReference type="STRING" id="585034.ECIAI1_2301"/>
<dbReference type="GeneID" id="93774960"/>
<dbReference type="eggNOG" id="COG2197">
    <property type="taxonomic scope" value="Bacteria"/>
</dbReference>
<dbReference type="OMA" id="IEWVNIV"/>
<dbReference type="GO" id="GO:0003677">
    <property type="term" value="F:DNA binding"/>
    <property type="evidence" value="ECO:0007669"/>
    <property type="project" value="UniProtKB-UniRule"/>
</dbReference>
<dbReference type="GO" id="GO:0000160">
    <property type="term" value="P:phosphorelay signal transduction system"/>
    <property type="evidence" value="ECO:0007669"/>
    <property type="project" value="UniProtKB-UniRule"/>
</dbReference>
<dbReference type="GO" id="GO:0006355">
    <property type="term" value="P:regulation of DNA-templated transcription"/>
    <property type="evidence" value="ECO:0007669"/>
    <property type="project" value="UniProtKB-UniRule"/>
</dbReference>
<dbReference type="CDD" id="cd06170">
    <property type="entry name" value="LuxR_C_like"/>
    <property type="match status" value="1"/>
</dbReference>
<dbReference type="CDD" id="cd17535">
    <property type="entry name" value="REC_NarL-like"/>
    <property type="match status" value="1"/>
</dbReference>
<dbReference type="FunFam" id="1.10.10.10:FF:000072">
    <property type="entry name" value="Transcriptional regulatory protein RcsB"/>
    <property type="match status" value="1"/>
</dbReference>
<dbReference type="FunFam" id="3.40.50.2300:FF:000023">
    <property type="entry name" value="Transcriptional regulatory protein RcsB"/>
    <property type="match status" value="1"/>
</dbReference>
<dbReference type="Gene3D" id="3.40.50.2300">
    <property type="match status" value="1"/>
</dbReference>
<dbReference type="Gene3D" id="1.10.10.10">
    <property type="entry name" value="Winged helix-like DNA-binding domain superfamily/Winged helix DNA-binding domain"/>
    <property type="match status" value="1"/>
</dbReference>
<dbReference type="HAMAP" id="MF_00981">
    <property type="entry name" value="RcsB"/>
    <property type="match status" value="1"/>
</dbReference>
<dbReference type="InterPro" id="IPR011006">
    <property type="entry name" value="CheY-like_superfamily"/>
</dbReference>
<dbReference type="InterPro" id="IPR030864">
    <property type="entry name" value="RcsB"/>
</dbReference>
<dbReference type="InterPro" id="IPR016032">
    <property type="entry name" value="Sig_transdc_resp-reg_C-effctor"/>
</dbReference>
<dbReference type="InterPro" id="IPR001789">
    <property type="entry name" value="Sig_transdc_resp-reg_receiver"/>
</dbReference>
<dbReference type="InterPro" id="IPR000792">
    <property type="entry name" value="Tscrpt_reg_LuxR_C"/>
</dbReference>
<dbReference type="InterPro" id="IPR039420">
    <property type="entry name" value="WalR-like"/>
</dbReference>
<dbReference type="InterPro" id="IPR036388">
    <property type="entry name" value="WH-like_DNA-bd_sf"/>
</dbReference>
<dbReference type="NCBIfam" id="NF008098">
    <property type="entry name" value="PRK10840.1"/>
    <property type="match status" value="1"/>
</dbReference>
<dbReference type="PANTHER" id="PTHR43214:SF17">
    <property type="entry name" value="TRANSCRIPTIONAL REGULATORY PROTEIN RCSB"/>
    <property type="match status" value="1"/>
</dbReference>
<dbReference type="PANTHER" id="PTHR43214">
    <property type="entry name" value="TWO-COMPONENT RESPONSE REGULATOR"/>
    <property type="match status" value="1"/>
</dbReference>
<dbReference type="Pfam" id="PF00196">
    <property type="entry name" value="GerE"/>
    <property type="match status" value="1"/>
</dbReference>
<dbReference type="Pfam" id="PF00072">
    <property type="entry name" value="Response_reg"/>
    <property type="match status" value="1"/>
</dbReference>
<dbReference type="PRINTS" id="PR00038">
    <property type="entry name" value="HTHLUXR"/>
</dbReference>
<dbReference type="SMART" id="SM00421">
    <property type="entry name" value="HTH_LUXR"/>
    <property type="match status" value="1"/>
</dbReference>
<dbReference type="SMART" id="SM00448">
    <property type="entry name" value="REC"/>
    <property type="match status" value="1"/>
</dbReference>
<dbReference type="SUPFAM" id="SSF46894">
    <property type="entry name" value="C-terminal effector domain of the bipartite response regulators"/>
    <property type="match status" value="1"/>
</dbReference>
<dbReference type="SUPFAM" id="SSF52172">
    <property type="entry name" value="CheY-like"/>
    <property type="match status" value="1"/>
</dbReference>
<dbReference type="PROSITE" id="PS00622">
    <property type="entry name" value="HTH_LUXR_1"/>
    <property type="match status" value="1"/>
</dbReference>
<dbReference type="PROSITE" id="PS50043">
    <property type="entry name" value="HTH_LUXR_2"/>
    <property type="match status" value="1"/>
</dbReference>
<dbReference type="PROSITE" id="PS50110">
    <property type="entry name" value="RESPONSE_REGULATORY"/>
    <property type="match status" value="1"/>
</dbReference>
<comment type="function">
    <text evidence="1 3">Component of the Rcs signaling system, which controls transcription of numerous genes. RcsB is the response regulator that binds to regulatory DNA regions. Can function both in an RcsA-dependent or RcsA-independent manner (By similarity). Involved in regulation of K30 capsular polysaccharide synthesis.</text>
</comment>
<comment type="subunit">
    <text evidence="1">Interacts with RcsD and RcsA.</text>
</comment>
<comment type="PTM">
    <text evidence="1">Phosphorylated and activated by RcsD.</text>
</comment>
<comment type="similarity">
    <text evidence="1">Belongs to the RcsB family.</text>
</comment>
<accession>P0DMC8</accession>
<accession>P14374</accession>
<accession>P69407</accession>
<evidence type="ECO:0000255" key="1">
    <source>
        <dbReference type="HAMAP-Rule" id="MF_00981"/>
    </source>
</evidence>
<evidence type="ECO:0000255" key="2">
    <source>
        <dbReference type="PROSITE-ProRule" id="PRU00169"/>
    </source>
</evidence>
<evidence type="ECO:0000269" key="3">
    <source>
    </source>
</evidence>
<feature type="chain" id="PRO_0000425416" description="Transcriptional regulatory protein RcsB">
    <location>
        <begin position="1"/>
        <end position="216"/>
    </location>
</feature>
<feature type="domain" description="Response regulatory" evidence="2">
    <location>
        <begin position="5"/>
        <end position="124"/>
    </location>
</feature>
<feature type="domain" description="HTH luxR-type" evidence="1">
    <location>
        <begin position="144"/>
        <end position="209"/>
    </location>
</feature>
<feature type="DNA-binding region" description="H-T-H motif" evidence="1">
    <location>
        <begin position="168"/>
        <end position="187"/>
    </location>
</feature>
<feature type="modified residue" description="4-aspartylphosphate" evidence="1">
    <location>
        <position position="56"/>
    </location>
</feature>
<proteinExistence type="evidence at protein level"/>
<organism>
    <name type="scientific">Escherichia coli</name>
    <dbReference type="NCBI Taxonomy" id="562"/>
    <lineage>
        <taxon>Bacteria</taxon>
        <taxon>Pseudomonadati</taxon>
        <taxon>Pseudomonadota</taxon>
        <taxon>Gammaproteobacteria</taxon>
        <taxon>Enterobacterales</taxon>
        <taxon>Enterobacteriaceae</taxon>
        <taxon>Escherichia</taxon>
    </lineage>
</organism>
<keyword id="KW-0238">DNA-binding</keyword>
<keyword id="KW-0597">Phosphoprotein</keyword>
<keyword id="KW-0804">Transcription</keyword>
<keyword id="KW-0805">Transcription regulation</keyword>
<keyword id="KW-0902">Two-component regulatory system</keyword>
<name>RCSB_ECOLX</name>